<protein>
    <recommendedName>
        <fullName>Radial spoke head 14 homolog</fullName>
    </recommendedName>
    <alternativeName>
        <fullName>Rhabdoid tumor deletion region protein 1</fullName>
    </alternativeName>
</protein>
<reference key="1">
    <citation type="journal article" date="2005" name="Science">
        <title>The transcriptional landscape of the mammalian genome.</title>
        <authorList>
            <person name="Carninci P."/>
            <person name="Kasukawa T."/>
            <person name="Katayama S."/>
            <person name="Gough J."/>
            <person name="Frith M.C."/>
            <person name="Maeda N."/>
            <person name="Oyama R."/>
            <person name="Ravasi T."/>
            <person name="Lenhard B."/>
            <person name="Wells C."/>
            <person name="Kodzius R."/>
            <person name="Shimokawa K."/>
            <person name="Bajic V.B."/>
            <person name="Brenner S.E."/>
            <person name="Batalov S."/>
            <person name="Forrest A.R."/>
            <person name="Zavolan M."/>
            <person name="Davis M.J."/>
            <person name="Wilming L.G."/>
            <person name="Aidinis V."/>
            <person name="Allen J.E."/>
            <person name="Ambesi-Impiombato A."/>
            <person name="Apweiler R."/>
            <person name="Aturaliya R.N."/>
            <person name="Bailey T.L."/>
            <person name="Bansal M."/>
            <person name="Baxter L."/>
            <person name="Beisel K.W."/>
            <person name="Bersano T."/>
            <person name="Bono H."/>
            <person name="Chalk A.M."/>
            <person name="Chiu K.P."/>
            <person name="Choudhary V."/>
            <person name="Christoffels A."/>
            <person name="Clutterbuck D.R."/>
            <person name="Crowe M.L."/>
            <person name="Dalla E."/>
            <person name="Dalrymple B.P."/>
            <person name="de Bono B."/>
            <person name="Della Gatta G."/>
            <person name="di Bernardo D."/>
            <person name="Down T."/>
            <person name="Engstrom P."/>
            <person name="Fagiolini M."/>
            <person name="Faulkner G."/>
            <person name="Fletcher C.F."/>
            <person name="Fukushima T."/>
            <person name="Furuno M."/>
            <person name="Futaki S."/>
            <person name="Gariboldi M."/>
            <person name="Georgii-Hemming P."/>
            <person name="Gingeras T.R."/>
            <person name="Gojobori T."/>
            <person name="Green R.E."/>
            <person name="Gustincich S."/>
            <person name="Harbers M."/>
            <person name="Hayashi Y."/>
            <person name="Hensch T.K."/>
            <person name="Hirokawa N."/>
            <person name="Hill D."/>
            <person name="Huminiecki L."/>
            <person name="Iacono M."/>
            <person name="Ikeo K."/>
            <person name="Iwama A."/>
            <person name="Ishikawa T."/>
            <person name="Jakt M."/>
            <person name="Kanapin A."/>
            <person name="Katoh M."/>
            <person name="Kawasawa Y."/>
            <person name="Kelso J."/>
            <person name="Kitamura H."/>
            <person name="Kitano H."/>
            <person name="Kollias G."/>
            <person name="Krishnan S.P."/>
            <person name="Kruger A."/>
            <person name="Kummerfeld S.K."/>
            <person name="Kurochkin I.V."/>
            <person name="Lareau L.F."/>
            <person name="Lazarevic D."/>
            <person name="Lipovich L."/>
            <person name="Liu J."/>
            <person name="Liuni S."/>
            <person name="McWilliam S."/>
            <person name="Madan Babu M."/>
            <person name="Madera M."/>
            <person name="Marchionni L."/>
            <person name="Matsuda H."/>
            <person name="Matsuzawa S."/>
            <person name="Miki H."/>
            <person name="Mignone F."/>
            <person name="Miyake S."/>
            <person name="Morris K."/>
            <person name="Mottagui-Tabar S."/>
            <person name="Mulder N."/>
            <person name="Nakano N."/>
            <person name="Nakauchi H."/>
            <person name="Ng P."/>
            <person name="Nilsson R."/>
            <person name="Nishiguchi S."/>
            <person name="Nishikawa S."/>
            <person name="Nori F."/>
            <person name="Ohara O."/>
            <person name="Okazaki Y."/>
            <person name="Orlando V."/>
            <person name="Pang K.C."/>
            <person name="Pavan W.J."/>
            <person name="Pavesi G."/>
            <person name="Pesole G."/>
            <person name="Petrovsky N."/>
            <person name="Piazza S."/>
            <person name="Reed J."/>
            <person name="Reid J.F."/>
            <person name="Ring B.Z."/>
            <person name="Ringwald M."/>
            <person name="Rost B."/>
            <person name="Ruan Y."/>
            <person name="Salzberg S.L."/>
            <person name="Sandelin A."/>
            <person name="Schneider C."/>
            <person name="Schoenbach C."/>
            <person name="Sekiguchi K."/>
            <person name="Semple C.A."/>
            <person name="Seno S."/>
            <person name="Sessa L."/>
            <person name="Sheng Y."/>
            <person name="Shibata Y."/>
            <person name="Shimada H."/>
            <person name="Shimada K."/>
            <person name="Silva D."/>
            <person name="Sinclair B."/>
            <person name="Sperling S."/>
            <person name="Stupka E."/>
            <person name="Sugiura K."/>
            <person name="Sultana R."/>
            <person name="Takenaka Y."/>
            <person name="Taki K."/>
            <person name="Tammoja K."/>
            <person name="Tan S.L."/>
            <person name="Tang S."/>
            <person name="Taylor M.S."/>
            <person name="Tegner J."/>
            <person name="Teichmann S.A."/>
            <person name="Ueda H.R."/>
            <person name="van Nimwegen E."/>
            <person name="Verardo R."/>
            <person name="Wei C.L."/>
            <person name="Yagi K."/>
            <person name="Yamanishi H."/>
            <person name="Zabarovsky E."/>
            <person name="Zhu S."/>
            <person name="Zimmer A."/>
            <person name="Hide W."/>
            <person name="Bult C."/>
            <person name="Grimmond S.M."/>
            <person name="Teasdale R.D."/>
            <person name="Liu E.T."/>
            <person name="Brusic V."/>
            <person name="Quackenbush J."/>
            <person name="Wahlestedt C."/>
            <person name="Mattick J.S."/>
            <person name="Hume D.A."/>
            <person name="Kai C."/>
            <person name="Sasaki D."/>
            <person name="Tomaru Y."/>
            <person name="Fukuda S."/>
            <person name="Kanamori-Katayama M."/>
            <person name="Suzuki M."/>
            <person name="Aoki J."/>
            <person name="Arakawa T."/>
            <person name="Iida J."/>
            <person name="Imamura K."/>
            <person name="Itoh M."/>
            <person name="Kato T."/>
            <person name="Kawaji H."/>
            <person name="Kawagashira N."/>
            <person name="Kawashima T."/>
            <person name="Kojima M."/>
            <person name="Kondo S."/>
            <person name="Konno H."/>
            <person name="Nakano K."/>
            <person name="Ninomiya N."/>
            <person name="Nishio T."/>
            <person name="Okada M."/>
            <person name="Plessy C."/>
            <person name="Shibata K."/>
            <person name="Shiraki T."/>
            <person name="Suzuki S."/>
            <person name="Tagami M."/>
            <person name="Waki K."/>
            <person name="Watahiki A."/>
            <person name="Okamura-Oho Y."/>
            <person name="Suzuki H."/>
            <person name="Kawai J."/>
            <person name="Hayashizaki Y."/>
        </authorList>
    </citation>
    <scope>NUCLEOTIDE SEQUENCE [LARGE SCALE MRNA]</scope>
    <source>
        <strain>C57BL/6J</strain>
        <tissue>Testis</tissue>
    </source>
</reference>
<reference key="2">
    <citation type="journal article" date="2009" name="PLoS Biol.">
        <title>Lineage-specific biology revealed by a finished genome assembly of the mouse.</title>
        <authorList>
            <person name="Church D.M."/>
            <person name="Goodstadt L."/>
            <person name="Hillier L.W."/>
            <person name="Zody M.C."/>
            <person name="Goldstein S."/>
            <person name="She X."/>
            <person name="Bult C.J."/>
            <person name="Agarwala R."/>
            <person name="Cherry J.L."/>
            <person name="DiCuccio M."/>
            <person name="Hlavina W."/>
            <person name="Kapustin Y."/>
            <person name="Meric P."/>
            <person name="Maglott D."/>
            <person name="Birtle Z."/>
            <person name="Marques A.C."/>
            <person name="Graves T."/>
            <person name="Zhou S."/>
            <person name="Teague B."/>
            <person name="Potamousis K."/>
            <person name="Churas C."/>
            <person name="Place M."/>
            <person name="Herschleb J."/>
            <person name="Runnheim R."/>
            <person name="Forrest D."/>
            <person name="Amos-Landgraf J."/>
            <person name="Schwartz D.C."/>
            <person name="Cheng Z."/>
            <person name="Lindblad-Toh K."/>
            <person name="Eichler E.E."/>
            <person name="Ponting C.P."/>
        </authorList>
    </citation>
    <scope>NUCLEOTIDE SEQUENCE [LARGE SCALE GENOMIC DNA]</scope>
    <source>
        <strain>C57BL/6J</strain>
    </source>
</reference>
<reference key="3">
    <citation type="submission" date="2005-09" db="EMBL/GenBank/DDBJ databases">
        <authorList>
            <person name="Mural R.J."/>
            <person name="Adams M.D."/>
            <person name="Myers E.W."/>
            <person name="Smith H.O."/>
            <person name="Venter J.C."/>
        </authorList>
    </citation>
    <scope>NUCLEOTIDE SEQUENCE [LARGE SCALE GENOMIC DNA]</scope>
</reference>
<reference key="4">
    <citation type="journal article" date="2004" name="Genome Res.">
        <title>The status, quality, and expansion of the NIH full-length cDNA project: the Mammalian Gene Collection (MGC).</title>
        <authorList>
            <consortium name="The MGC Project Team"/>
        </authorList>
    </citation>
    <scope>NUCLEOTIDE SEQUENCE [LARGE SCALE MRNA]</scope>
    <source>
        <tissue>Brain</tissue>
    </source>
</reference>
<reference key="5">
    <citation type="journal article" date="2022" name="Cell Rep.">
        <title>Differential requirements of IQUB for the assembly of radial spoke 1 and the motility of mouse cilia and flagella.</title>
        <authorList>
            <person name="Zhang X."/>
            <person name="Xiao Z."/>
            <person name="Zhang J."/>
            <person name="Xu C."/>
            <person name="Liu S."/>
            <person name="Cheng L."/>
            <person name="Zhou S."/>
            <person name="Zhao S."/>
            <person name="Zhang Y."/>
            <person name="Wu J."/>
            <person name="Wang Y."/>
            <person name="Liu M."/>
        </authorList>
    </citation>
    <scope>FUNCTION</scope>
    <scope>IDENTIFICATION IN RADIAL SPOKE COMPLEX 1</scope>
    <scope>IDENTIFICATION BY MASS SPECTROMETRY</scope>
    <scope>SUBCELLULAR LOCATION</scope>
</reference>
<organism>
    <name type="scientific">Mus musculus</name>
    <name type="common">Mouse</name>
    <dbReference type="NCBI Taxonomy" id="10090"/>
    <lineage>
        <taxon>Eukaryota</taxon>
        <taxon>Metazoa</taxon>
        <taxon>Chordata</taxon>
        <taxon>Craniata</taxon>
        <taxon>Vertebrata</taxon>
        <taxon>Euteleostomi</taxon>
        <taxon>Mammalia</taxon>
        <taxon>Eutheria</taxon>
        <taxon>Euarchontoglires</taxon>
        <taxon>Glires</taxon>
        <taxon>Rodentia</taxon>
        <taxon>Myomorpha</taxon>
        <taxon>Muroidea</taxon>
        <taxon>Muridae</taxon>
        <taxon>Murinae</taxon>
        <taxon>Mus</taxon>
        <taxon>Mus</taxon>
    </lineage>
</organism>
<gene>
    <name evidence="5" type="primary">Rsph14</name>
    <name type="synonym">Rtdr1</name>
</gene>
<proteinExistence type="evidence at protein level"/>
<dbReference type="EMBL" id="AK017008">
    <property type="protein sequence ID" value="BAB30547.1"/>
    <property type="molecule type" value="mRNA"/>
</dbReference>
<dbReference type="EMBL" id="AC142500">
    <property type="status" value="NOT_ANNOTATED_CDS"/>
    <property type="molecule type" value="Genomic_DNA"/>
</dbReference>
<dbReference type="EMBL" id="CH466553">
    <property type="protein sequence ID" value="EDL31936.1"/>
    <property type="molecule type" value="Genomic_DNA"/>
</dbReference>
<dbReference type="EMBL" id="BC147792">
    <property type="protein sequence ID" value="AAI47793.1"/>
    <property type="molecule type" value="mRNA"/>
</dbReference>
<dbReference type="EMBL" id="BC147801">
    <property type="protein sequence ID" value="AAI47802.1"/>
    <property type="molecule type" value="mRNA"/>
</dbReference>
<dbReference type="CCDS" id="CCDS48596.1"/>
<dbReference type="RefSeq" id="NP_001157005.1">
    <property type="nucleotide sequence ID" value="NM_001163533.1"/>
</dbReference>
<dbReference type="RefSeq" id="NP_001157006.1">
    <property type="nucleotide sequence ID" value="NM_001163534.1"/>
</dbReference>
<dbReference type="RefSeq" id="NP_001157007.1">
    <property type="nucleotide sequence ID" value="NM_001163535.1"/>
</dbReference>
<dbReference type="RefSeq" id="NP_082006.1">
    <property type="nucleotide sequence ID" value="NM_027730.1"/>
</dbReference>
<dbReference type="SMR" id="Q9D3W1"/>
<dbReference type="ComplexPortal" id="CPX-8161">
    <property type="entry name" value="Radial spoke complex, ciliiar variant"/>
</dbReference>
<dbReference type="ComplexPortal" id="CPX-8162">
    <property type="entry name" value="Radial spoke complex, flagellar variant"/>
</dbReference>
<dbReference type="FunCoup" id="Q9D3W1">
    <property type="interactions" value="19"/>
</dbReference>
<dbReference type="STRING" id="10090.ENSMUSP00000131632"/>
<dbReference type="PhosphoSitePlus" id="Q9D3W1"/>
<dbReference type="PaxDb" id="10090-ENSMUSP00000131632"/>
<dbReference type="ProteomicsDB" id="256937"/>
<dbReference type="Antibodypedia" id="9251">
    <property type="antibodies" value="153 antibodies from 26 providers"/>
</dbReference>
<dbReference type="Ensembl" id="ENSMUST00000009214.10">
    <property type="protein sequence ID" value="ENSMUSP00000009214.4"/>
    <property type="gene ID" value="ENSMUSG00000009070.15"/>
</dbReference>
<dbReference type="Ensembl" id="ENSMUST00000179546.8">
    <property type="protein sequence ID" value="ENSMUSP00000136715.2"/>
    <property type="gene ID" value="ENSMUSG00000009070.15"/>
</dbReference>
<dbReference type="GeneID" id="71236"/>
<dbReference type="KEGG" id="mmu:71236"/>
<dbReference type="UCSC" id="uc007fps.1">
    <property type="organism name" value="mouse"/>
</dbReference>
<dbReference type="AGR" id="MGI:1918486"/>
<dbReference type="CTD" id="27156"/>
<dbReference type="MGI" id="MGI:1918486">
    <property type="gene designation" value="Rsph14"/>
</dbReference>
<dbReference type="VEuPathDB" id="HostDB:ENSMUSG00000009070"/>
<dbReference type="eggNOG" id="KOG0167">
    <property type="taxonomic scope" value="Eukaryota"/>
</dbReference>
<dbReference type="GeneTree" id="ENSGT00500000044989"/>
<dbReference type="HOGENOM" id="CLU_057538_0_0_1"/>
<dbReference type="InParanoid" id="Q9D3W1"/>
<dbReference type="OMA" id="VWQHDVI"/>
<dbReference type="OrthoDB" id="409644at2759"/>
<dbReference type="PhylomeDB" id="Q9D3W1"/>
<dbReference type="BioGRID-ORCS" id="71236">
    <property type="hits" value="1 hit in 76 CRISPR screens"/>
</dbReference>
<dbReference type="ChiTaRS" id="Rsph14">
    <property type="organism name" value="mouse"/>
</dbReference>
<dbReference type="PRO" id="PR:Q9D3W1"/>
<dbReference type="Proteomes" id="UP000000589">
    <property type="component" value="Chromosome 10"/>
</dbReference>
<dbReference type="RNAct" id="Q9D3W1">
    <property type="molecule type" value="protein"/>
</dbReference>
<dbReference type="Bgee" id="ENSMUSG00000009070">
    <property type="expression patterns" value="Expressed in spermatocyte and 42 other cell types or tissues"/>
</dbReference>
<dbReference type="ExpressionAtlas" id="Q9D3W1">
    <property type="expression patterns" value="baseline and differential"/>
</dbReference>
<dbReference type="GO" id="GO:0097729">
    <property type="term" value="C:9+2 motile cilium"/>
    <property type="evidence" value="ECO:0000305"/>
    <property type="project" value="UniProtKB"/>
</dbReference>
<dbReference type="GO" id="GO:0005576">
    <property type="term" value="C:extracellular region"/>
    <property type="evidence" value="ECO:0007669"/>
    <property type="project" value="GOC"/>
</dbReference>
<dbReference type="GO" id="GO:0001534">
    <property type="term" value="C:radial spoke"/>
    <property type="evidence" value="ECO:0000314"/>
    <property type="project" value="UniProtKB"/>
</dbReference>
<dbReference type="GO" id="GO:0036126">
    <property type="term" value="C:sperm flagellum"/>
    <property type="evidence" value="ECO:0000305"/>
    <property type="project" value="UniProtKB"/>
</dbReference>
<dbReference type="GO" id="GO:0003351">
    <property type="term" value="P:epithelial cilium movement involved in extracellular fluid movement"/>
    <property type="evidence" value="ECO:0000305"/>
    <property type="project" value="UniProtKB"/>
</dbReference>
<dbReference type="GO" id="GO:0030317">
    <property type="term" value="P:flagellated sperm motility"/>
    <property type="evidence" value="ECO:0000305"/>
    <property type="project" value="UniProtKB"/>
</dbReference>
<dbReference type="GO" id="GO:0007618">
    <property type="term" value="P:mating"/>
    <property type="evidence" value="ECO:0000305"/>
    <property type="project" value="UniProtKB"/>
</dbReference>
<dbReference type="Gene3D" id="1.25.10.10">
    <property type="entry name" value="Leucine-rich Repeat Variant"/>
    <property type="match status" value="2"/>
</dbReference>
<dbReference type="InterPro" id="IPR011989">
    <property type="entry name" value="ARM-like"/>
</dbReference>
<dbReference type="InterPro" id="IPR016024">
    <property type="entry name" value="ARM-type_fold"/>
</dbReference>
<dbReference type="InterPro" id="IPR000225">
    <property type="entry name" value="Armadillo"/>
</dbReference>
<dbReference type="InterPro" id="IPR042856">
    <property type="entry name" value="RSP14"/>
</dbReference>
<dbReference type="PANTHER" id="PTHR15599:SF1">
    <property type="entry name" value="RADIAL SPOKE HEAD 14 HOMOLOG"/>
    <property type="match status" value="1"/>
</dbReference>
<dbReference type="PANTHER" id="PTHR15599">
    <property type="entry name" value="RTDR1"/>
    <property type="match status" value="1"/>
</dbReference>
<dbReference type="Pfam" id="PF00514">
    <property type="entry name" value="Arm"/>
    <property type="match status" value="2"/>
</dbReference>
<dbReference type="SMART" id="SM00185">
    <property type="entry name" value="ARM"/>
    <property type="match status" value="4"/>
</dbReference>
<dbReference type="SUPFAM" id="SSF48371">
    <property type="entry name" value="ARM repeat"/>
    <property type="match status" value="1"/>
</dbReference>
<dbReference type="PROSITE" id="PS50176">
    <property type="entry name" value="ARM_REPEAT"/>
    <property type="match status" value="1"/>
</dbReference>
<feature type="chain" id="PRO_0000432959" description="Radial spoke head 14 homolog">
    <location>
        <begin position="1"/>
        <end position="341"/>
    </location>
</feature>
<feature type="repeat" description="ARM 1" evidence="1">
    <location>
        <begin position="16"/>
        <end position="55"/>
    </location>
</feature>
<feature type="repeat" description="ARM 2" evidence="1">
    <location>
        <begin position="57"/>
        <end position="96"/>
    </location>
</feature>
<feature type="repeat" description="ARM 3" evidence="1">
    <location>
        <begin position="99"/>
        <end position="138"/>
    </location>
</feature>
<feature type="repeat" description="ARM 4" evidence="1">
    <location>
        <begin position="139"/>
        <end position="178"/>
    </location>
</feature>
<feature type="repeat" description="ARM 5" evidence="1">
    <location>
        <begin position="180"/>
        <end position="217"/>
    </location>
</feature>
<feature type="repeat" description="ARM 6" evidence="1">
    <location>
        <begin position="219"/>
        <end position="258"/>
    </location>
</feature>
<feature type="repeat" description="ARM 7" evidence="1">
    <location>
        <begin position="260"/>
        <end position="300"/>
    </location>
</feature>
<feature type="repeat" description="ARM 8" evidence="1">
    <location>
        <begin position="302"/>
        <end position="339"/>
    </location>
</feature>
<comment type="function">
    <text evidence="2">Functions as part of axonemal radial spoke complexes that play an important part in the motility of sperm and cilia.</text>
</comment>
<comment type="subunit">
    <text evidence="2">Component of the axonemal radial spoke complex 1 (RS1), at least composed of spoke head proteins RSPH1, RSPH3, RSPH9 and the cilia-specific component RSPH4A or sperm-specific component RSPH6A, spoke stalk proteins RSPH14, DNAJB13, DYDC1, ROPN1L and NME5, and the anchor protein IQUB.</text>
</comment>
<comment type="subcellular location">
    <subcellularLocation>
        <location evidence="4">Cytoplasm</location>
        <location evidence="4">Cytoskeleton</location>
        <location evidence="4">Flagellum axoneme</location>
    </subcellularLocation>
</comment>
<comment type="similarity">
    <text evidence="3">Belongs to the flagellar radial spoke RSP14 family.</text>
</comment>
<name>RSP14_MOUSE</name>
<sequence length="341" mass="37809">MAHARISMYMPPDIDPTKAAIAYGCRALSKLNEELQSRDLLTRQKALVALCDLMHDPEYVYEAINIGCLESLKTLLQDDDNLVRIKTTEVLYIMATHYVGRVGFLKHDIIQALSLLLSDHQTLCRENLHQAYKHLAQLPKGAQGIVQSGLIPSLVRKLQKEEDHIQEIILDTLALCLQEDATEALESQAVPCLKEKLLSQNSEIRSKAARALIAISIPLDGKNQVWKNKVIPILVTLLSDTDEEVKANAAGALMHATVTTEGKYAALDANAIEPLLELLSTNPKTKLCLNATKALTMLAEAPEGRKLLLSHVPIFRYLLAHKNEAIQRAAEVAIKVIEWKP</sequence>
<evidence type="ECO:0000255" key="1"/>
<evidence type="ECO:0000269" key="2">
    <source>
    </source>
</evidence>
<evidence type="ECO:0000305" key="3"/>
<evidence type="ECO:0000305" key="4">
    <source>
    </source>
</evidence>
<evidence type="ECO:0000312" key="5">
    <source>
        <dbReference type="MGI" id="MGI:1918486"/>
    </source>
</evidence>
<keyword id="KW-0966">Cell projection</keyword>
<keyword id="KW-0969">Cilium</keyword>
<keyword id="KW-0963">Cytoplasm</keyword>
<keyword id="KW-0206">Cytoskeleton</keyword>
<keyword id="KW-0282">Flagellum</keyword>
<keyword id="KW-1185">Reference proteome</keyword>
<keyword id="KW-0677">Repeat</keyword>
<accession>Q9D3W1</accession>